<sequence length="418" mass="46105">MTLLALGINHKTAPVSLRERVTFSPDTLDQALDSLLAQPMVQGGVVLSTCNRTELYLSVEEQDNLQEALIRWLCDYHNLNEDDLRNSLYWHQDNDAVSHLMRVASGLDSLVLGEPQILGQVKKAFADSQKGHLNASALERMFQKSFSVAKRVRTETDIGASAVSVAFAACTLARQIFESLSTVTVLLVGAGETIELVARHLREHKVQKMIIANRTRERAQALADEVGAEVISLSDIDARLQDADIIISSTASPLPIIGKGMVERALKSRRNQPMLLVDIAVPRDVEPEVGKLANAYLYSVDDLQSIISHNLAQRQAAAVEAETIVEQEASEFMAWLRAQGASETIREYRSQSEQIRDELTTKALSALQQGGDAQAILQDLAWKLTNRLIHAPTKSLQQAARDGDDERLNILRDSLGLE</sequence>
<comment type="function">
    <text evidence="1">Catalyzes the NADPH-dependent reduction of glutamyl-tRNA(Glu) to glutamate 1-semialdehyde (GSA).</text>
</comment>
<comment type="catalytic activity">
    <reaction evidence="1">
        <text>(S)-4-amino-5-oxopentanoate + tRNA(Glu) + NADP(+) = L-glutamyl-tRNA(Glu) + NADPH + H(+)</text>
        <dbReference type="Rhea" id="RHEA:12344"/>
        <dbReference type="Rhea" id="RHEA-COMP:9663"/>
        <dbReference type="Rhea" id="RHEA-COMP:9680"/>
        <dbReference type="ChEBI" id="CHEBI:15378"/>
        <dbReference type="ChEBI" id="CHEBI:57501"/>
        <dbReference type="ChEBI" id="CHEBI:57783"/>
        <dbReference type="ChEBI" id="CHEBI:58349"/>
        <dbReference type="ChEBI" id="CHEBI:78442"/>
        <dbReference type="ChEBI" id="CHEBI:78520"/>
        <dbReference type="EC" id="1.2.1.70"/>
    </reaction>
</comment>
<comment type="pathway">
    <text evidence="1">Porphyrin-containing compound metabolism; protoporphyrin-IX biosynthesis; 5-aminolevulinate from L-glutamyl-tRNA(Glu): step 1/2.</text>
</comment>
<comment type="subunit">
    <text evidence="1">Homodimer.</text>
</comment>
<comment type="domain">
    <text evidence="1">Possesses an unusual extended V-shaped dimeric structure with each monomer consisting of three distinct domains arranged along a curved 'spinal' alpha-helix. The N-terminal catalytic domain specifically recognizes the glutamate moiety of the substrate. The second domain is the NADPH-binding domain, and the third C-terminal domain is responsible for dimerization.</text>
</comment>
<comment type="miscellaneous">
    <text evidence="1">During catalysis, the active site Cys acts as a nucleophile attacking the alpha-carbonyl group of tRNA-bound glutamate with the formation of a thioester intermediate between enzyme and glutamate, and the concomitant release of tRNA(Glu). The thioester intermediate is finally reduced by direct hydride transfer from NADPH, to form the product GSA.</text>
</comment>
<comment type="similarity">
    <text evidence="1">Belongs to the glutamyl-tRNA reductase family.</text>
</comment>
<organism>
    <name type="scientific">Salmonella newport (strain SL254)</name>
    <dbReference type="NCBI Taxonomy" id="423368"/>
    <lineage>
        <taxon>Bacteria</taxon>
        <taxon>Pseudomonadati</taxon>
        <taxon>Pseudomonadota</taxon>
        <taxon>Gammaproteobacteria</taxon>
        <taxon>Enterobacterales</taxon>
        <taxon>Enterobacteriaceae</taxon>
        <taxon>Salmonella</taxon>
    </lineage>
</organism>
<dbReference type="EC" id="1.2.1.70" evidence="1"/>
<dbReference type="EMBL" id="CP001113">
    <property type="protein sequence ID" value="ACF61321.1"/>
    <property type="molecule type" value="Genomic_DNA"/>
</dbReference>
<dbReference type="RefSeq" id="WP_000173208.1">
    <property type="nucleotide sequence ID" value="NZ_CCMR01000003.1"/>
</dbReference>
<dbReference type="SMR" id="B4SUG3"/>
<dbReference type="KEGG" id="see:SNSL254_A1908"/>
<dbReference type="HOGENOM" id="CLU_035113_2_2_6"/>
<dbReference type="UniPathway" id="UPA00251">
    <property type="reaction ID" value="UER00316"/>
</dbReference>
<dbReference type="Proteomes" id="UP000008824">
    <property type="component" value="Chromosome"/>
</dbReference>
<dbReference type="GO" id="GO:0008883">
    <property type="term" value="F:glutamyl-tRNA reductase activity"/>
    <property type="evidence" value="ECO:0007669"/>
    <property type="project" value="UniProtKB-UniRule"/>
</dbReference>
<dbReference type="GO" id="GO:0050661">
    <property type="term" value="F:NADP binding"/>
    <property type="evidence" value="ECO:0007669"/>
    <property type="project" value="InterPro"/>
</dbReference>
<dbReference type="GO" id="GO:0019353">
    <property type="term" value="P:protoporphyrinogen IX biosynthetic process from glutamate"/>
    <property type="evidence" value="ECO:0007669"/>
    <property type="project" value="TreeGrafter"/>
</dbReference>
<dbReference type="CDD" id="cd05213">
    <property type="entry name" value="NAD_bind_Glutamyl_tRNA_reduct"/>
    <property type="match status" value="1"/>
</dbReference>
<dbReference type="FunFam" id="3.30.460.30:FF:000001">
    <property type="entry name" value="Glutamyl-tRNA reductase"/>
    <property type="match status" value="1"/>
</dbReference>
<dbReference type="FunFam" id="3.40.50.720:FF:000031">
    <property type="entry name" value="Glutamyl-tRNA reductase"/>
    <property type="match status" value="1"/>
</dbReference>
<dbReference type="Gene3D" id="3.30.460.30">
    <property type="entry name" value="Glutamyl-tRNA reductase, N-terminal domain"/>
    <property type="match status" value="1"/>
</dbReference>
<dbReference type="Gene3D" id="3.40.50.720">
    <property type="entry name" value="NAD(P)-binding Rossmann-like Domain"/>
    <property type="match status" value="1"/>
</dbReference>
<dbReference type="HAMAP" id="MF_00087">
    <property type="entry name" value="Glu_tRNA_reductase"/>
    <property type="match status" value="1"/>
</dbReference>
<dbReference type="InterPro" id="IPR000343">
    <property type="entry name" value="4pyrrol_synth_GluRdtase"/>
</dbReference>
<dbReference type="InterPro" id="IPR015896">
    <property type="entry name" value="4pyrrol_synth_GluRdtase_dimer"/>
</dbReference>
<dbReference type="InterPro" id="IPR015895">
    <property type="entry name" value="4pyrrol_synth_GluRdtase_N"/>
</dbReference>
<dbReference type="InterPro" id="IPR018214">
    <property type="entry name" value="GluRdtase_CS"/>
</dbReference>
<dbReference type="InterPro" id="IPR036453">
    <property type="entry name" value="GluRdtase_dimer_dom_sf"/>
</dbReference>
<dbReference type="InterPro" id="IPR036343">
    <property type="entry name" value="GluRdtase_N_sf"/>
</dbReference>
<dbReference type="InterPro" id="IPR036291">
    <property type="entry name" value="NAD(P)-bd_dom_sf"/>
</dbReference>
<dbReference type="InterPro" id="IPR006151">
    <property type="entry name" value="Shikm_DH/Glu-tRNA_Rdtase"/>
</dbReference>
<dbReference type="NCBIfam" id="TIGR01035">
    <property type="entry name" value="hemA"/>
    <property type="match status" value="1"/>
</dbReference>
<dbReference type="PANTHER" id="PTHR43013">
    <property type="entry name" value="GLUTAMYL-TRNA REDUCTASE"/>
    <property type="match status" value="1"/>
</dbReference>
<dbReference type="PANTHER" id="PTHR43013:SF1">
    <property type="entry name" value="GLUTAMYL-TRNA REDUCTASE"/>
    <property type="match status" value="1"/>
</dbReference>
<dbReference type="Pfam" id="PF00745">
    <property type="entry name" value="GlutR_dimer"/>
    <property type="match status" value="1"/>
</dbReference>
<dbReference type="Pfam" id="PF05201">
    <property type="entry name" value="GlutR_N"/>
    <property type="match status" value="1"/>
</dbReference>
<dbReference type="Pfam" id="PF01488">
    <property type="entry name" value="Shikimate_DH"/>
    <property type="match status" value="1"/>
</dbReference>
<dbReference type="PIRSF" id="PIRSF000445">
    <property type="entry name" value="4pyrrol_synth_GluRdtase"/>
    <property type="match status" value="1"/>
</dbReference>
<dbReference type="SUPFAM" id="SSF69742">
    <property type="entry name" value="Glutamyl tRNA-reductase catalytic, N-terminal domain"/>
    <property type="match status" value="1"/>
</dbReference>
<dbReference type="SUPFAM" id="SSF69075">
    <property type="entry name" value="Glutamyl tRNA-reductase dimerization domain"/>
    <property type="match status" value="1"/>
</dbReference>
<dbReference type="SUPFAM" id="SSF51735">
    <property type="entry name" value="NAD(P)-binding Rossmann-fold domains"/>
    <property type="match status" value="1"/>
</dbReference>
<dbReference type="PROSITE" id="PS00747">
    <property type="entry name" value="GLUTR"/>
    <property type="match status" value="1"/>
</dbReference>
<feature type="chain" id="PRO_1000093166" description="Glutamyl-tRNA reductase">
    <location>
        <begin position="1"/>
        <end position="418"/>
    </location>
</feature>
<feature type="active site" description="Nucleophile" evidence="1">
    <location>
        <position position="50"/>
    </location>
</feature>
<feature type="binding site" evidence="1">
    <location>
        <begin position="49"/>
        <end position="52"/>
    </location>
    <ligand>
        <name>substrate</name>
    </ligand>
</feature>
<feature type="binding site" evidence="1">
    <location>
        <position position="109"/>
    </location>
    <ligand>
        <name>substrate</name>
    </ligand>
</feature>
<feature type="binding site" evidence="1">
    <location>
        <begin position="114"/>
        <end position="116"/>
    </location>
    <ligand>
        <name>substrate</name>
    </ligand>
</feature>
<feature type="binding site" evidence="1">
    <location>
        <position position="120"/>
    </location>
    <ligand>
        <name>substrate</name>
    </ligand>
</feature>
<feature type="binding site" evidence="1">
    <location>
        <begin position="189"/>
        <end position="194"/>
    </location>
    <ligand>
        <name>NADP(+)</name>
        <dbReference type="ChEBI" id="CHEBI:58349"/>
    </ligand>
</feature>
<feature type="site" description="Important for activity" evidence="1">
    <location>
        <position position="99"/>
    </location>
</feature>
<name>HEM1_SALNS</name>
<gene>
    <name evidence="1" type="primary">hemA</name>
    <name type="ordered locus">SNSL254_A1908</name>
</gene>
<keyword id="KW-0521">NADP</keyword>
<keyword id="KW-0560">Oxidoreductase</keyword>
<keyword id="KW-0627">Porphyrin biosynthesis</keyword>
<reference key="1">
    <citation type="journal article" date="2011" name="J. Bacteriol.">
        <title>Comparative genomics of 28 Salmonella enterica isolates: evidence for CRISPR-mediated adaptive sublineage evolution.</title>
        <authorList>
            <person name="Fricke W.F."/>
            <person name="Mammel M.K."/>
            <person name="McDermott P.F."/>
            <person name="Tartera C."/>
            <person name="White D.G."/>
            <person name="Leclerc J.E."/>
            <person name="Ravel J."/>
            <person name="Cebula T.A."/>
        </authorList>
    </citation>
    <scope>NUCLEOTIDE SEQUENCE [LARGE SCALE GENOMIC DNA]</scope>
    <source>
        <strain>SL254</strain>
    </source>
</reference>
<evidence type="ECO:0000255" key="1">
    <source>
        <dbReference type="HAMAP-Rule" id="MF_00087"/>
    </source>
</evidence>
<accession>B4SUG3</accession>
<protein>
    <recommendedName>
        <fullName evidence="1">Glutamyl-tRNA reductase</fullName>
        <shortName evidence="1">GluTR</shortName>
        <ecNumber evidence="1">1.2.1.70</ecNumber>
    </recommendedName>
</protein>
<proteinExistence type="inferred from homology"/>